<protein>
    <recommendedName>
        <fullName evidence="1">Large ribosomal subunit protein bL33C</fullName>
    </recommendedName>
    <alternativeName>
        <fullName evidence="1">50S ribosomal protein L33 3</fullName>
    </alternativeName>
</protein>
<accession>Q5M277</accession>
<keyword id="KW-1185">Reference proteome</keyword>
<keyword id="KW-0687">Ribonucleoprotein</keyword>
<keyword id="KW-0689">Ribosomal protein</keyword>
<evidence type="ECO:0000255" key="1">
    <source>
        <dbReference type="HAMAP-Rule" id="MF_00294"/>
    </source>
</evidence>
<feature type="chain" id="PRO_0000356743" description="Large ribosomal subunit protein bL33C">
    <location>
        <begin position="1"/>
        <end position="49"/>
    </location>
</feature>
<dbReference type="EMBL" id="CP000023">
    <property type="protein sequence ID" value="AAV61569.1"/>
    <property type="molecule type" value="Genomic_DNA"/>
</dbReference>
<dbReference type="SMR" id="Q5M277"/>
<dbReference type="STRING" id="264199.stu1975"/>
<dbReference type="KEGG" id="stl:stu1975"/>
<dbReference type="eggNOG" id="COG0267">
    <property type="taxonomic scope" value="Bacteria"/>
</dbReference>
<dbReference type="HOGENOM" id="CLU_190949_3_2_9"/>
<dbReference type="Proteomes" id="UP000001170">
    <property type="component" value="Chromosome"/>
</dbReference>
<dbReference type="GO" id="GO:0005737">
    <property type="term" value="C:cytoplasm"/>
    <property type="evidence" value="ECO:0007669"/>
    <property type="project" value="UniProtKB-ARBA"/>
</dbReference>
<dbReference type="GO" id="GO:1990904">
    <property type="term" value="C:ribonucleoprotein complex"/>
    <property type="evidence" value="ECO:0007669"/>
    <property type="project" value="UniProtKB-KW"/>
</dbReference>
<dbReference type="GO" id="GO:0005840">
    <property type="term" value="C:ribosome"/>
    <property type="evidence" value="ECO:0007669"/>
    <property type="project" value="UniProtKB-KW"/>
</dbReference>
<dbReference type="GO" id="GO:0003735">
    <property type="term" value="F:structural constituent of ribosome"/>
    <property type="evidence" value="ECO:0007669"/>
    <property type="project" value="InterPro"/>
</dbReference>
<dbReference type="GO" id="GO:0006412">
    <property type="term" value="P:translation"/>
    <property type="evidence" value="ECO:0007669"/>
    <property type="project" value="UniProtKB-UniRule"/>
</dbReference>
<dbReference type="Gene3D" id="2.20.28.120">
    <property type="entry name" value="Ribosomal protein L33"/>
    <property type="match status" value="1"/>
</dbReference>
<dbReference type="HAMAP" id="MF_00294">
    <property type="entry name" value="Ribosomal_bL33"/>
    <property type="match status" value="1"/>
</dbReference>
<dbReference type="InterPro" id="IPR001705">
    <property type="entry name" value="Ribosomal_bL33"/>
</dbReference>
<dbReference type="InterPro" id="IPR018264">
    <property type="entry name" value="Ribosomal_bL33_CS"/>
</dbReference>
<dbReference type="InterPro" id="IPR038584">
    <property type="entry name" value="Ribosomal_bL33_sf"/>
</dbReference>
<dbReference type="InterPro" id="IPR011332">
    <property type="entry name" value="Ribosomal_zn-bd"/>
</dbReference>
<dbReference type="NCBIfam" id="NF001764">
    <property type="entry name" value="PRK00504.1"/>
    <property type="match status" value="1"/>
</dbReference>
<dbReference type="NCBIfam" id="NF001860">
    <property type="entry name" value="PRK00595.1"/>
    <property type="match status" value="1"/>
</dbReference>
<dbReference type="NCBIfam" id="TIGR01023">
    <property type="entry name" value="rpmG_bact"/>
    <property type="match status" value="1"/>
</dbReference>
<dbReference type="PANTHER" id="PTHR43168">
    <property type="entry name" value="50S RIBOSOMAL PROTEIN L33, CHLOROPLASTIC"/>
    <property type="match status" value="1"/>
</dbReference>
<dbReference type="PANTHER" id="PTHR43168:SF2">
    <property type="entry name" value="LARGE RIBOSOMAL SUBUNIT PROTEIN BL33C"/>
    <property type="match status" value="1"/>
</dbReference>
<dbReference type="Pfam" id="PF00471">
    <property type="entry name" value="Ribosomal_L33"/>
    <property type="match status" value="1"/>
</dbReference>
<dbReference type="SUPFAM" id="SSF57829">
    <property type="entry name" value="Zn-binding ribosomal proteins"/>
    <property type="match status" value="1"/>
</dbReference>
<dbReference type="PROSITE" id="PS00582">
    <property type="entry name" value="RIBOSOMAL_L33"/>
    <property type="match status" value="1"/>
</dbReference>
<name>RL333_STRT2</name>
<proteinExistence type="inferred from homology"/>
<organism>
    <name type="scientific">Streptococcus thermophilus (strain ATCC BAA-250 / LMG 18311)</name>
    <dbReference type="NCBI Taxonomy" id="264199"/>
    <lineage>
        <taxon>Bacteria</taxon>
        <taxon>Bacillati</taxon>
        <taxon>Bacillota</taxon>
        <taxon>Bacilli</taxon>
        <taxon>Lactobacillales</taxon>
        <taxon>Streptococcaceae</taxon>
        <taxon>Streptococcus</taxon>
    </lineage>
</organism>
<reference key="1">
    <citation type="journal article" date="2004" name="Nat. Biotechnol.">
        <title>Complete sequence and comparative genome analysis of the dairy bacterium Streptococcus thermophilus.</title>
        <authorList>
            <person name="Bolotin A."/>
            <person name="Quinquis B."/>
            <person name="Renault P."/>
            <person name="Sorokin A."/>
            <person name="Ehrlich S.D."/>
            <person name="Kulakauskas S."/>
            <person name="Lapidus A."/>
            <person name="Goltsman E."/>
            <person name="Mazur M."/>
            <person name="Pusch G.D."/>
            <person name="Fonstein M."/>
            <person name="Overbeek R."/>
            <person name="Kyprides N."/>
            <person name="Purnelle B."/>
            <person name="Prozzi D."/>
            <person name="Ngui K."/>
            <person name="Masuy D."/>
            <person name="Hancy F."/>
            <person name="Burteau S."/>
            <person name="Boutry M."/>
            <person name="Delcour J."/>
            <person name="Goffeau A."/>
            <person name="Hols P."/>
        </authorList>
    </citation>
    <scope>NUCLEOTIDE SEQUENCE [LARGE SCALE GENOMIC DNA]</scope>
    <source>
        <strain>ATCC BAA-250 / LMG 18311</strain>
    </source>
</reference>
<gene>
    <name evidence="1" type="primary">rpmG3</name>
    <name type="synonym">rpmGB</name>
    <name type="ordered locus">stu1975</name>
</gene>
<comment type="similarity">
    <text evidence="1">Belongs to the bacterial ribosomal protein bL33 family.</text>
</comment>
<sequence>MRVNITLEHKESGERLYLTSKNKRNTPDRLQLKKYSPKLRKHVIFTEVK</sequence>